<name>ISPD_SYNAS</name>
<keyword id="KW-0414">Isoprene biosynthesis</keyword>
<keyword id="KW-0548">Nucleotidyltransferase</keyword>
<keyword id="KW-1185">Reference proteome</keyword>
<keyword id="KW-0808">Transferase</keyword>
<sequence length="234" mass="26060">MKPKVVAIVPAGGSGRRMQSSNPKQYFLINGMPVLVHTLLRLQQFPLIDEILLVVPHSDMVFVRDNIEKPYQLTKIRGIVAGGRERQDSVRNGLKCVVEKDEIVVIHDGVRPFVTEKILSRVIDAAHRSGAAIAAVPAMDTVKEVHSDGHISVTLDRKRIWLAQTPQAFHRRIIQEAYKKAVQDDYYGTDDASLVERLGIPVEVVPGSCTNIKITTPDDLILAEAFLKKEEGRI</sequence>
<feature type="chain" id="PRO_0000237832" description="2-C-methyl-D-erythritol 4-phosphate cytidylyltransferase">
    <location>
        <begin position="1"/>
        <end position="234"/>
    </location>
</feature>
<feature type="site" description="Transition state stabilizer" evidence="1">
    <location>
        <position position="17"/>
    </location>
</feature>
<feature type="site" description="Transition state stabilizer" evidence="1">
    <location>
        <position position="24"/>
    </location>
</feature>
<feature type="site" description="Positions MEP for the nucleophilic attack" evidence="1">
    <location>
        <position position="157"/>
    </location>
</feature>
<feature type="site" description="Positions MEP for the nucleophilic attack" evidence="1">
    <location>
        <position position="213"/>
    </location>
</feature>
<accession>Q2LUS9</accession>
<organism>
    <name type="scientific">Syntrophus aciditrophicus (strain SB)</name>
    <dbReference type="NCBI Taxonomy" id="56780"/>
    <lineage>
        <taxon>Bacteria</taxon>
        <taxon>Pseudomonadati</taxon>
        <taxon>Thermodesulfobacteriota</taxon>
        <taxon>Syntrophia</taxon>
        <taxon>Syntrophales</taxon>
        <taxon>Syntrophaceae</taxon>
        <taxon>Syntrophus</taxon>
    </lineage>
</organism>
<protein>
    <recommendedName>
        <fullName evidence="1">2-C-methyl-D-erythritol 4-phosphate cytidylyltransferase</fullName>
        <ecNumber evidence="1">2.7.7.60</ecNumber>
    </recommendedName>
    <alternativeName>
        <fullName evidence="1">4-diphosphocytidyl-2C-methyl-D-erythritol synthase</fullName>
    </alternativeName>
    <alternativeName>
        <fullName evidence="1">MEP cytidylyltransferase</fullName>
        <shortName evidence="1">MCT</shortName>
    </alternativeName>
</protein>
<comment type="function">
    <text evidence="1">Catalyzes the formation of 4-diphosphocytidyl-2-C-methyl-D-erythritol from CTP and 2-C-methyl-D-erythritol 4-phosphate (MEP).</text>
</comment>
<comment type="catalytic activity">
    <reaction evidence="1">
        <text>2-C-methyl-D-erythritol 4-phosphate + CTP + H(+) = 4-CDP-2-C-methyl-D-erythritol + diphosphate</text>
        <dbReference type="Rhea" id="RHEA:13429"/>
        <dbReference type="ChEBI" id="CHEBI:15378"/>
        <dbReference type="ChEBI" id="CHEBI:33019"/>
        <dbReference type="ChEBI" id="CHEBI:37563"/>
        <dbReference type="ChEBI" id="CHEBI:57823"/>
        <dbReference type="ChEBI" id="CHEBI:58262"/>
        <dbReference type="EC" id="2.7.7.60"/>
    </reaction>
</comment>
<comment type="pathway">
    <text evidence="1">Isoprenoid biosynthesis; isopentenyl diphosphate biosynthesis via DXP pathway; isopentenyl diphosphate from 1-deoxy-D-xylulose 5-phosphate: step 2/6.</text>
</comment>
<comment type="similarity">
    <text evidence="1">Belongs to the IspD/TarI cytidylyltransferase family. IspD subfamily.</text>
</comment>
<proteinExistence type="inferred from homology"/>
<evidence type="ECO:0000255" key="1">
    <source>
        <dbReference type="HAMAP-Rule" id="MF_00108"/>
    </source>
</evidence>
<gene>
    <name evidence="1" type="primary">ispD</name>
    <name type="ordered locus">SYNAS_19640</name>
    <name type="ORF">SYN_01401</name>
</gene>
<dbReference type="EC" id="2.7.7.60" evidence="1"/>
<dbReference type="EMBL" id="CP000252">
    <property type="protein sequence ID" value="ABC77843.1"/>
    <property type="molecule type" value="Genomic_DNA"/>
</dbReference>
<dbReference type="RefSeq" id="WP_011417864.1">
    <property type="nucleotide sequence ID" value="NC_007759.1"/>
</dbReference>
<dbReference type="SMR" id="Q2LUS9"/>
<dbReference type="FunCoup" id="Q2LUS9">
    <property type="interactions" value="449"/>
</dbReference>
<dbReference type="STRING" id="56780.SYN_01401"/>
<dbReference type="KEGG" id="sat:SYN_01401"/>
<dbReference type="eggNOG" id="COG1211">
    <property type="taxonomic scope" value="Bacteria"/>
</dbReference>
<dbReference type="HOGENOM" id="CLU_061281_2_2_7"/>
<dbReference type="InParanoid" id="Q2LUS9"/>
<dbReference type="OrthoDB" id="9804336at2"/>
<dbReference type="UniPathway" id="UPA00056">
    <property type="reaction ID" value="UER00093"/>
</dbReference>
<dbReference type="Proteomes" id="UP000001933">
    <property type="component" value="Chromosome"/>
</dbReference>
<dbReference type="GO" id="GO:0050518">
    <property type="term" value="F:2-C-methyl-D-erythritol 4-phosphate cytidylyltransferase activity"/>
    <property type="evidence" value="ECO:0007669"/>
    <property type="project" value="UniProtKB-UniRule"/>
</dbReference>
<dbReference type="GO" id="GO:0019288">
    <property type="term" value="P:isopentenyl diphosphate biosynthetic process, methylerythritol 4-phosphate pathway"/>
    <property type="evidence" value="ECO:0007669"/>
    <property type="project" value="UniProtKB-UniRule"/>
</dbReference>
<dbReference type="CDD" id="cd02516">
    <property type="entry name" value="CDP-ME_synthetase"/>
    <property type="match status" value="1"/>
</dbReference>
<dbReference type="FunFam" id="3.90.550.10:FF:000003">
    <property type="entry name" value="2-C-methyl-D-erythritol 4-phosphate cytidylyltransferase"/>
    <property type="match status" value="1"/>
</dbReference>
<dbReference type="Gene3D" id="3.90.550.10">
    <property type="entry name" value="Spore Coat Polysaccharide Biosynthesis Protein SpsA, Chain A"/>
    <property type="match status" value="1"/>
</dbReference>
<dbReference type="HAMAP" id="MF_00108">
    <property type="entry name" value="IspD"/>
    <property type="match status" value="1"/>
</dbReference>
<dbReference type="InterPro" id="IPR001228">
    <property type="entry name" value="IspD"/>
</dbReference>
<dbReference type="InterPro" id="IPR034683">
    <property type="entry name" value="IspD/TarI"/>
</dbReference>
<dbReference type="InterPro" id="IPR050088">
    <property type="entry name" value="IspD/TarI_cytidylyltransf_bact"/>
</dbReference>
<dbReference type="InterPro" id="IPR018294">
    <property type="entry name" value="ISPD_synthase_CS"/>
</dbReference>
<dbReference type="InterPro" id="IPR029044">
    <property type="entry name" value="Nucleotide-diphossugar_trans"/>
</dbReference>
<dbReference type="NCBIfam" id="TIGR00453">
    <property type="entry name" value="ispD"/>
    <property type="match status" value="1"/>
</dbReference>
<dbReference type="PANTHER" id="PTHR32125">
    <property type="entry name" value="2-C-METHYL-D-ERYTHRITOL 4-PHOSPHATE CYTIDYLYLTRANSFERASE, CHLOROPLASTIC"/>
    <property type="match status" value="1"/>
</dbReference>
<dbReference type="PANTHER" id="PTHR32125:SF4">
    <property type="entry name" value="2-C-METHYL-D-ERYTHRITOL 4-PHOSPHATE CYTIDYLYLTRANSFERASE, CHLOROPLASTIC"/>
    <property type="match status" value="1"/>
</dbReference>
<dbReference type="Pfam" id="PF01128">
    <property type="entry name" value="IspD"/>
    <property type="match status" value="1"/>
</dbReference>
<dbReference type="SUPFAM" id="SSF53448">
    <property type="entry name" value="Nucleotide-diphospho-sugar transferases"/>
    <property type="match status" value="1"/>
</dbReference>
<dbReference type="PROSITE" id="PS01295">
    <property type="entry name" value="ISPD"/>
    <property type="match status" value="1"/>
</dbReference>
<reference key="1">
    <citation type="journal article" date="2007" name="Proc. Natl. Acad. Sci. U.S.A.">
        <title>The genome of Syntrophus aciditrophicus: life at the thermodynamic limit of microbial growth.</title>
        <authorList>
            <person name="McInerney M.J."/>
            <person name="Rohlin L."/>
            <person name="Mouttaki H."/>
            <person name="Kim U."/>
            <person name="Krupp R.S."/>
            <person name="Rios-Hernandez L."/>
            <person name="Sieber J."/>
            <person name="Struchtemeyer C.G."/>
            <person name="Bhattacharyya A."/>
            <person name="Campbell J.W."/>
            <person name="Gunsalus R.P."/>
        </authorList>
    </citation>
    <scope>NUCLEOTIDE SEQUENCE [LARGE SCALE GENOMIC DNA]</scope>
    <source>
        <strain>SB</strain>
    </source>
</reference>